<organism>
    <name type="scientific">Anaeromyxobacter dehalogenans (strain 2CP-1 / ATCC BAA-258)</name>
    <dbReference type="NCBI Taxonomy" id="455488"/>
    <lineage>
        <taxon>Bacteria</taxon>
        <taxon>Pseudomonadati</taxon>
        <taxon>Myxococcota</taxon>
        <taxon>Myxococcia</taxon>
        <taxon>Myxococcales</taxon>
        <taxon>Cystobacterineae</taxon>
        <taxon>Anaeromyxobacteraceae</taxon>
        <taxon>Anaeromyxobacter</taxon>
    </lineage>
</organism>
<dbReference type="EC" id="2.1.2.11" evidence="1"/>
<dbReference type="EMBL" id="CP001359">
    <property type="protein sequence ID" value="ACL67147.1"/>
    <property type="molecule type" value="Genomic_DNA"/>
</dbReference>
<dbReference type="RefSeq" id="WP_015934893.1">
    <property type="nucleotide sequence ID" value="NC_011891.1"/>
</dbReference>
<dbReference type="SMR" id="B8J7G7"/>
<dbReference type="KEGG" id="acp:A2cp1_3823"/>
<dbReference type="HOGENOM" id="CLU_036645_1_0_7"/>
<dbReference type="UniPathway" id="UPA00028">
    <property type="reaction ID" value="UER00003"/>
</dbReference>
<dbReference type="Proteomes" id="UP000007089">
    <property type="component" value="Chromosome"/>
</dbReference>
<dbReference type="GO" id="GO:0005737">
    <property type="term" value="C:cytoplasm"/>
    <property type="evidence" value="ECO:0007669"/>
    <property type="project" value="UniProtKB-SubCell"/>
</dbReference>
<dbReference type="GO" id="GO:0003864">
    <property type="term" value="F:3-methyl-2-oxobutanoate hydroxymethyltransferase activity"/>
    <property type="evidence" value="ECO:0007669"/>
    <property type="project" value="UniProtKB-UniRule"/>
</dbReference>
<dbReference type="GO" id="GO:0000287">
    <property type="term" value="F:magnesium ion binding"/>
    <property type="evidence" value="ECO:0007669"/>
    <property type="project" value="TreeGrafter"/>
</dbReference>
<dbReference type="GO" id="GO:0015940">
    <property type="term" value="P:pantothenate biosynthetic process"/>
    <property type="evidence" value="ECO:0007669"/>
    <property type="project" value="UniProtKB-UniRule"/>
</dbReference>
<dbReference type="CDD" id="cd06557">
    <property type="entry name" value="KPHMT-like"/>
    <property type="match status" value="1"/>
</dbReference>
<dbReference type="FunFam" id="3.20.20.60:FF:000003">
    <property type="entry name" value="3-methyl-2-oxobutanoate hydroxymethyltransferase"/>
    <property type="match status" value="1"/>
</dbReference>
<dbReference type="Gene3D" id="3.20.20.60">
    <property type="entry name" value="Phosphoenolpyruvate-binding domains"/>
    <property type="match status" value="1"/>
</dbReference>
<dbReference type="HAMAP" id="MF_00156">
    <property type="entry name" value="PanB"/>
    <property type="match status" value="1"/>
</dbReference>
<dbReference type="InterPro" id="IPR003700">
    <property type="entry name" value="Pantoate_hydroxy_MeTrfase"/>
</dbReference>
<dbReference type="InterPro" id="IPR015813">
    <property type="entry name" value="Pyrv/PenolPyrv_kinase-like_dom"/>
</dbReference>
<dbReference type="InterPro" id="IPR040442">
    <property type="entry name" value="Pyrv_kinase-like_dom_sf"/>
</dbReference>
<dbReference type="NCBIfam" id="TIGR00222">
    <property type="entry name" value="panB"/>
    <property type="match status" value="1"/>
</dbReference>
<dbReference type="NCBIfam" id="NF001452">
    <property type="entry name" value="PRK00311.1"/>
    <property type="match status" value="1"/>
</dbReference>
<dbReference type="PANTHER" id="PTHR20881">
    <property type="entry name" value="3-METHYL-2-OXOBUTANOATE HYDROXYMETHYLTRANSFERASE"/>
    <property type="match status" value="1"/>
</dbReference>
<dbReference type="PANTHER" id="PTHR20881:SF0">
    <property type="entry name" value="3-METHYL-2-OXOBUTANOATE HYDROXYMETHYLTRANSFERASE"/>
    <property type="match status" value="1"/>
</dbReference>
<dbReference type="Pfam" id="PF02548">
    <property type="entry name" value="Pantoate_transf"/>
    <property type="match status" value="1"/>
</dbReference>
<dbReference type="PIRSF" id="PIRSF000388">
    <property type="entry name" value="Pantoate_hydroxy_MeTrfase"/>
    <property type="match status" value="1"/>
</dbReference>
<dbReference type="SUPFAM" id="SSF51621">
    <property type="entry name" value="Phosphoenolpyruvate/pyruvate domain"/>
    <property type="match status" value="1"/>
</dbReference>
<keyword id="KW-0963">Cytoplasm</keyword>
<keyword id="KW-0460">Magnesium</keyword>
<keyword id="KW-0479">Metal-binding</keyword>
<keyword id="KW-0566">Pantothenate biosynthesis</keyword>
<keyword id="KW-0808">Transferase</keyword>
<proteinExistence type="inferred from homology"/>
<reference key="1">
    <citation type="submission" date="2009-01" db="EMBL/GenBank/DDBJ databases">
        <title>Complete sequence of Anaeromyxobacter dehalogenans 2CP-1.</title>
        <authorList>
            <person name="Lucas S."/>
            <person name="Copeland A."/>
            <person name="Lapidus A."/>
            <person name="Glavina del Rio T."/>
            <person name="Dalin E."/>
            <person name="Tice H."/>
            <person name="Bruce D."/>
            <person name="Goodwin L."/>
            <person name="Pitluck S."/>
            <person name="Saunders E."/>
            <person name="Brettin T."/>
            <person name="Detter J.C."/>
            <person name="Han C."/>
            <person name="Larimer F."/>
            <person name="Land M."/>
            <person name="Hauser L."/>
            <person name="Kyrpides N."/>
            <person name="Ovchinnikova G."/>
            <person name="Beliaev A.S."/>
            <person name="Richardson P."/>
        </authorList>
    </citation>
    <scope>NUCLEOTIDE SEQUENCE [LARGE SCALE GENOMIC DNA]</scope>
    <source>
        <strain>2CP-1 / ATCC BAA-258</strain>
    </source>
</reference>
<protein>
    <recommendedName>
        <fullName evidence="1">3-methyl-2-oxobutanoate hydroxymethyltransferase</fullName>
        <ecNumber evidence="1">2.1.2.11</ecNumber>
    </recommendedName>
    <alternativeName>
        <fullName evidence="1">Ketopantoate hydroxymethyltransferase</fullName>
        <shortName evidence="1">KPHMT</shortName>
    </alternativeName>
</protein>
<gene>
    <name evidence="1" type="primary">panB</name>
    <name type="ordered locus">A2cp1_3823</name>
</gene>
<feature type="chain" id="PRO_1000123365" description="3-methyl-2-oxobutanoate hydroxymethyltransferase">
    <location>
        <begin position="1"/>
        <end position="306"/>
    </location>
</feature>
<feature type="active site" description="Proton acceptor" evidence="1">
    <location>
        <position position="195"/>
    </location>
</feature>
<feature type="binding site" evidence="1">
    <location>
        <begin position="53"/>
        <end position="54"/>
    </location>
    <ligand>
        <name>3-methyl-2-oxobutanoate</name>
        <dbReference type="ChEBI" id="CHEBI:11851"/>
    </ligand>
</feature>
<feature type="binding site" evidence="1">
    <location>
        <position position="53"/>
    </location>
    <ligand>
        <name>Mg(2+)</name>
        <dbReference type="ChEBI" id="CHEBI:18420"/>
    </ligand>
</feature>
<feature type="binding site" evidence="1">
    <location>
        <position position="96"/>
    </location>
    <ligand>
        <name>3-methyl-2-oxobutanoate</name>
        <dbReference type="ChEBI" id="CHEBI:11851"/>
    </ligand>
</feature>
<feature type="binding site" evidence="1">
    <location>
        <position position="96"/>
    </location>
    <ligand>
        <name>Mg(2+)</name>
        <dbReference type="ChEBI" id="CHEBI:18420"/>
    </ligand>
</feature>
<feature type="binding site" evidence="1">
    <location>
        <position position="126"/>
    </location>
    <ligand>
        <name>3-methyl-2-oxobutanoate</name>
        <dbReference type="ChEBI" id="CHEBI:11851"/>
    </ligand>
</feature>
<feature type="binding site" evidence="1">
    <location>
        <position position="128"/>
    </location>
    <ligand>
        <name>Mg(2+)</name>
        <dbReference type="ChEBI" id="CHEBI:18420"/>
    </ligand>
</feature>
<sequence length="306" mass="32307">MSSHPPAPRKHVTIHELRRMKESGERIAMVTAYDATAARLVAVAGVDAVLVGDSLGMAVQGHESTLPVTLDQMVYHSAMVRRGLARGDGRAHLVTDMSFGSYQASADEAVKAAMRLVAEGGAEAVKLEGGAEFGEVIRRIVRAGVPVMGHIGLTPQSVHKMGGYVVQGKDSEKAQQILRDARALEAAGCYALVLECIPSELARIVTSQLRIPTIGIGAGPHCDGQVLVLNDLLGLDASFTPRFVKRFGEVGAAVQDAVGAYVGEVKARAFPDDAHSFHSSSVRLVPVERHAEAAEEEPPDAIGAPI</sequence>
<comment type="function">
    <text evidence="1">Catalyzes the reversible reaction in which hydroxymethyl group from 5,10-methylenetetrahydrofolate is transferred onto alpha-ketoisovalerate to form ketopantoate.</text>
</comment>
<comment type="catalytic activity">
    <reaction evidence="1">
        <text>3-methyl-2-oxobutanoate + (6R)-5,10-methylene-5,6,7,8-tetrahydrofolate + H2O = 2-dehydropantoate + (6S)-5,6,7,8-tetrahydrofolate</text>
        <dbReference type="Rhea" id="RHEA:11824"/>
        <dbReference type="ChEBI" id="CHEBI:11561"/>
        <dbReference type="ChEBI" id="CHEBI:11851"/>
        <dbReference type="ChEBI" id="CHEBI:15377"/>
        <dbReference type="ChEBI" id="CHEBI:15636"/>
        <dbReference type="ChEBI" id="CHEBI:57453"/>
        <dbReference type="EC" id="2.1.2.11"/>
    </reaction>
</comment>
<comment type="cofactor">
    <cofactor evidence="1">
        <name>Mg(2+)</name>
        <dbReference type="ChEBI" id="CHEBI:18420"/>
    </cofactor>
    <text evidence="1">Binds 1 Mg(2+) ion per subunit.</text>
</comment>
<comment type="pathway">
    <text evidence="1">Cofactor biosynthesis; (R)-pantothenate biosynthesis; (R)-pantoate from 3-methyl-2-oxobutanoate: step 1/2.</text>
</comment>
<comment type="subunit">
    <text evidence="1">Homodecamer; pentamer of dimers.</text>
</comment>
<comment type="subcellular location">
    <subcellularLocation>
        <location evidence="1">Cytoplasm</location>
    </subcellularLocation>
</comment>
<comment type="similarity">
    <text evidence="1">Belongs to the PanB family.</text>
</comment>
<accession>B8J7G7</accession>
<evidence type="ECO:0000255" key="1">
    <source>
        <dbReference type="HAMAP-Rule" id="MF_00156"/>
    </source>
</evidence>
<name>PANB_ANAD2</name>